<feature type="chain" id="PRO_0000118449" description="NADH-ubiquinone oxidoreductase chain 4L">
    <location>
        <begin position="1"/>
        <end position="98"/>
    </location>
</feature>
<feature type="transmembrane region" description="Helical" evidence="3">
    <location>
        <begin position="1"/>
        <end position="21"/>
    </location>
</feature>
<feature type="transmembrane region" description="Helical" evidence="3">
    <location>
        <begin position="29"/>
        <end position="49"/>
    </location>
</feature>
<feature type="transmembrane region" description="Helical" evidence="3">
    <location>
        <begin position="61"/>
        <end position="81"/>
    </location>
</feature>
<evidence type="ECO:0000250" key="1">
    <source>
        <dbReference type="UniProtKB" id="P03901"/>
    </source>
</evidence>
<evidence type="ECO:0000250" key="2">
    <source>
        <dbReference type="UniProtKB" id="P03902"/>
    </source>
</evidence>
<evidence type="ECO:0000255" key="3"/>
<evidence type="ECO:0000305" key="4"/>
<organism>
    <name type="scientific">Muntiacus feae</name>
    <name type="common">Fea's muntjac</name>
    <name type="synonym">Cervus feae</name>
    <dbReference type="NCBI Taxonomy" id="71855"/>
    <lineage>
        <taxon>Eukaryota</taxon>
        <taxon>Metazoa</taxon>
        <taxon>Chordata</taxon>
        <taxon>Craniata</taxon>
        <taxon>Vertebrata</taxon>
        <taxon>Euteleostomi</taxon>
        <taxon>Mammalia</taxon>
        <taxon>Eutheria</taxon>
        <taxon>Laurasiatheria</taxon>
        <taxon>Artiodactyla</taxon>
        <taxon>Ruminantia</taxon>
        <taxon>Pecora</taxon>
        <taxon>Cervidae</taxon>
        <taxon>Muntiacinae</taxon>
        <taxon>Muntiacus</taxon>
    </lineage>
</organism>
<proteinExistence type="inferred from homology"/>
<name>NU4LM_MUNFE</name>
<reference key="1">
    <citation type="journal article" date="2000" name="Mol. Biol. Evol.">
        <title>Rapid and parallel chromosomal number reductions in muntjac deer inferred from mitochondrial DNA phylogeny.</title>
        <authorList>
            <person name="Wang W."/>
            <person name="Lan H."/>
        </authorList>
    </citation>
    <scope>NUCLEOTIDE SEQUENCE [GENOMIC DNA]</scope>
</reference>
<protein>
    <recommendedName>
        <fullName>NADH-ubiquinone oxidoreductase chain 4L</fullName>
        <ecNumber>7.1.1.2</ecNumber>
    </recommendedName>
    <alternativeName>
        <fullName>NADH dehydrogenase subunit 4L</fullName>
    </alternativeName>
</protein>
<accession>Q7IVV3</accession>
<dbReference type="EC" id="7.1.1.2"/>
<dbReference type="EMBL" id="AF190677">
    <property type="protein sequence ID" value="AAG59678.1"/>
    <property type="molecule type" value="Genomic_DNA"/>
</dbReference>
<dbReference type="SMR" id="Q7IVV3"/>
<dbReference type="GO" id="GO:0005743">
    <property type="term" value="C:mitochondrial inner membrane"/>
    <property type="evidence" value="ECO:0000250"/>
    <property type="project" value="UniProtKB"/>
</dbReference>
<dbReference type="GO" id="GO:0045271">
    <property type="term" value="C:respiratory chain complex I"/>
    <property type="evidence" value="ECO:0000250"/>
    <property type="project" value="UniProtKB"/>
</dbReference>
<dbReference type="GO" id="GO:0008137">
    <property type="term" value="F:NADH dehydrogenase (ubiquinone) activity"/>
    <property type="evidence" value="ECO:0000250"/>
    <property type="project" value="UniProtKB"/>
</dbReference>
<dbReference type="GO" id="GO:0042773">
    <property type="term" value="P:ATP synthesis coupled electron transport"/>
    <property type="evidence" value="ECO:0007669"/>
    <property type="project" value="InterPro"/>
</dbReference>
<dbReference type="FunFam" id="1.10.287.3510:FF:000002">
    <property type="entry name" value="NADH-ubiquinone oxidoreductase chain 4L"/>
    <property type="match status" value="1"/>
</dbReference>
<dbReference type="Gene3D" id="1.10.287.3510">
    <property type="match status" value="1"/>
</dbReference>
<dbReference type="InterPro" id="IPR001133">
    <property type="entry name" value="NADH_UbQ_OxRdtase_chain4L/K"/>
</dbReference>
<dbReference type="InterPro" id="IPR039428">
    <property type="entry name" value="NUOK/Mnh_C1-like"/>
</dbReference>
<dbReference type="PANTHER" id="PTHR11434:SF0">
    <property type="entry name" value="NADH-UBIQUINONE OXIDOREDUCTASE CHAIN 4L"/>
    <property type="match status" value="1"/>
</dbReference>
<dbReference type="PANTHER" id="PTHR11434">
    <property type="entry name" value="NADH-UBIQUINONE OXIDOREDUCTASE SUBUNIT ND4L"/>
    <property type="match status" value="1"/>
</dbReference>
<dbReference type="Pfam" id="PF00420">
    <property type="entry name" value="Oxidored_q2"/>
    <property type="match status" value="1"/>
</dbReference>
<sequence>MSLVYMNIMTAFMVSLAGLLMYRSHLMSSLLCLEGMMLSLFVLATLTILNSHFTLASMMPIILLVFAACEAALGLSLLVMVSNTYGTDYVQNLNLLQC</sequence>
<comment type="function">
    <text evidence="1">Core subunit of the mitochondrial membrane respiratory chain NADH dehydrogenase (Complex I) which catalyzes electron transfer from NADH through the respiratory chain, using ubiquinone as an electron acceptor. Part of the enzyme membrane arm which is embedded in the lipid bilayer and involved in proton translocation.</text>
</comment>
<comment type="catalytic activity">
    <reaction evidence="1">
        <text>a ubiquinone + NADH + 5 H(+)(in) = a ubiquinol + NAD(+) + 4 H(+)(out)</text>
        <dbReference type="Rhea" id="RHEA:29091"/>
        <dbReference type="Rhea" id="RHEA-COMP:9565"/>
        <dbReference type="Rhea" id="RHEA-COMP:9566"/>
        <dbReference type="ChEBI" id="CHEBI:15378"/>
        <dbReference type="ChEBI" id="CHEBI:16389"/>
        <dbReference type="ChEBI" id="CHEBI:17976"/>
        <dbReference type="ChEBI" id="CHEBI:57540"/>
        <dbReference type="ChEBI" id="CHEBI:57945"/>
        <dbReference type="EC" id="7.1.1.2"/>
    </reaction>
    <physiologicalReaction direction="left-to-right" evidence="1">
        <dbReference type="Rhea" id="RHEA:29092"/>
    </physiologicalReaction>
</comment>
<comment type="subunit">
    <text evidence="2">Core subunit of respiratory chain NADH dehydrogenase (Complex I) which is composed of 45 different subunits.</text>
</comment>
<comment type="subcellular location">
    <subcellularLocation>
        <location evidence="2">Mitochondrion inner membrane</location>
        <topology evidence="3">Multi-pass membrane protein</topology>
    </subcellularLocation>
</comment>
<comment type="similarity">
    <text evidence="4">Belongs to the complex I subunit 4L family.</text>
</comment>
<keyword id="KW-0249">Electron transport</keyword>
<keyword id="KW-0472">Membrane</keyword>
<keyword id="KW-0496">Mitochondrion</keyword>
<keyword id="KW-0999">Mitochondrion inner membrane</keyword>
<keyword id="KW-0520">NAD</keyword>
<keyword id="KW-0679">Respiratory chain</keyword>
<keyword id="KW-1278">Translocase</keyword>
<keyword id="KW-0812">Transmembrane</keyword>
<keyword id="KW-1133">Transmembrane helix</keyword>
<keyword id="KW-0813">Transport</keyword>
<keyword id="KW-0830">Ubiquinone</keyword>
<geneLocation type="mitochondrion"/>
<gene>
    <name type="primary">MT-ND4L</name>
    <name type="synonym">MTND4L</name>
    <name type="synonym">NADH4L</name>
    <name type="synonym">ND4L</name>
</gene>